<name>SYL_YERPG</name>
<protein>
    <recommendedName>
        <fullName evidence="1">Leucine--tRNA ligase</fullName>
        <ecNumber evidence="1">6.1.1.4</ecNumber>
    </recommendedName>
    <alternativeName>
        <fullName evidence="1">Leucyl-tRNA synthetase</fullName>
        <shortName evidence="1">LeuRS</shortName>
    </alternativeName>
</protein>
<gene>
    <name evidence="1" type="primary">leuS</name>
    <name type="ordered locus">YpAngola_A1842</name>
</gene>
<accession>A9R6Z0</accession>
<comment type="catalytic activity">
    <reaction evidence="1">
        <text>tRNA(Leu) + L-leucine + ATP = L-leucyl-tRNA(Leu) + AMP + diphosphate</text>
        <dbReference type="Rhea" id="RHEA:11688"/>
        <dbReference type="Rhea" id="RHEA-COMP:9613"/>
        <dbReference type="Rhea" id="RHEA-COMP:9622"/>
        <dbReference type="ChEBI" id="CHEBI:30616"/>
        <dbReference type="ChEBI" id="CHEBI:33019"/>
        <dbReference type="ChEBI" id="CHEBI:57427"/>
        <dbReference type="ChEBI" id="CHEBI:78442"/>
        <dbReference type="ChEBI" id="CHEBI:78494"/>
        <dbReference type="ChEBI" id="CHEBI:456215"/>
        <dbReference type="EC" id="6.1.1.4"/>
    </reaction>
</comment>
<comment type="subcellular location">
    <subcellularLocation>
        <location evidence="1">Cytoplasm</location>
    </subcellularLocation>
</comment>
<comment type="similarity">
    <text evidence="1">Belongs to the class-I aminoacyl-tRNA synthetase family.</text>
</comment>
<keyword id="KW-0030">Aminoacyl-tRNA synthetase</keyword>
<keyword id="KW-0067">ATP-binding</keyword>
<keyword id="KW-0963">Cytoplasm</keyword>
<keyword id="KW-0436">Ligase</keyword>
<keyword id="KW-0547">Nucleotide-binding</keyword>
<keyword id="KW-0648">Protein biosynthesis</keyword>
<evidence type="ECO:0000255" key="1">
    <source>
        <dbReference type="HAMAP-Rule" id="MF_00049"/>
    </source>
</evidence>
<feature type="chain" id="PRO_1000091383" description="Leucine--tRNA ligase">
    <location>
        <begin position="1"/>
        <end position="860"/>
    </location>
</feature>
<feature type="short sequence motif" description="'HIGH' region">
    <location>
        <begin position="42"/>
        <end position="52"/>
    </location>
</feature>
<feature type="short sequence motif" description="'KMSKS' region">
    <location>
        <begin position="619"/>
        <end position="623"/>
    </location>
</feature>
<feature type="binding site" evidence="1">
    <location>
        <position position="622"/>
    </location>
    <ligand>
        <name>ATP</name>
        <dbReference type="ChEBI" id="CHEBI:30616"/>
    </ligand>
</feature>
<proteinExistence type="inferred from homology"/>
<sequence length="860" mass="97065">MQEQYRPEDIETQVQLHWQEKQTFKVTEDASKEKYYCLSMLPYPSGRLHMGHVRNYTIGDVISRYQRMLGKNVLQPIGWDAFGLPAEGAAVKNNTAPAPWTYDNIEYMKNQLKLLGFGYDWDREIATCKPDYYRWEQWFFTKLYEKGMVYKKTSAVNWCPHDLTVLANEQVIDGCCWRCDTKVERKEIPQWFIKITDYAEQLLNDLDTLESWPEQVKTMQRNWIGRSEGVDIVFDVVDSEEKLSVYTTRPDTFMGVTYVAVAAGHPLSLQAAATNPALADFVAECRNTKVAEAEMATMEKKGMATGLYAIHPLTGEKLPIWAANFVLMDYGTGAVMAVPGHDARDWEFATKYNLPIKPVILAADGSEPDLSQEAMTEKGTLFNSGEFDGLNHEDGFNAIADKLVALGVGQRKVNYRLRDWGVSRQRYWGAPIPMVTLEDGTVVPTPEDQLPVILPEDVVMDGISSPIKADPEWAKTTVNGIPGLRETDTFDTFMESSWYYARYTCPQYDDGMLDPAAANYWLPVDQYVGGIEHAIMHLMYFRFFHKLLRDAGLVDSDEPAKRLLCQGMVLADAFYYTGNNGERIWVSPVDAIVERDDKGRIVKAVDAEGHELVYAGMSKMSKSKNNGIDPQVMVEKYGADTVRLFMMFASPAEMTLEWQESGVEGANRFLKRVWRLAFDHTAKGAVKPLDIASLTEEQKSLRRDLHKTIAKVTDDVGRRQTFNTAIAAVMELMNKLGRAPQETEQDRALMQEALLAVVRMLYPFTPHVCFSLWQALGGEGDIDTAPWPIADEQAMVEDSKLVVVQVNGKVRGRITVPADATEQQVRERAGQEHLVAKYLDGITVRKVIYVPGKLLNLVVG</sequence>
<reference key="1">
    <citation type="journal article" date="2010" name="J. Bacteriol.">
        <title>Genome sequence of the deep-rooted Yersinia pestis strain Angola reveals new insights into the evolution and pangenome of the plague bacterium.</title>
        <authorList>
            <person name="Eppinger M."/>
            <person name="Worsham P.L."/>
            <person name="Nikolich M.P."/>
            <person name="Riley D.R."/>
            <person name="Sebastian Y."/>
            <person name="Mou S."/>
            <person name="Achtman M."/>
            <person name="Lindler L.E."/>
            <person name="Ravel J."/>
        </authorList>
    </citation>
    <scope>NUCLEOTIDE SEQUENCE [LARGE SCALE GENOMIC DNA]</scope>
    <source>
        <strain>Angola</strain>
    </source>
</reference>
<dbReference type="EC" id="6.1.1.4" evidence="1"/>
<dbReference type="EMBL" id="CP000901">
    <property type="protein sequence ID" value="ABX88207.1"/>
    <property type="molecule type" value="Genomic_DNA"/>
</dbReference>
<dbReference type="RefSeq" id="WP_012229505.1">
    <property type="nucleotide sequence ID" value="NC_010159.1"/>
</dbReference>
<dbReference type="SMR" id="A9R6Z0"/>
<dbReference type="KEGG" id="ypg:YpAngola_A1842"/>
<dbReference type="PATRIC" id="fig|349746.12.peg.2818"/>
<dbReference type="GO" id="GO:0005829">
    <property type="term" value="C:cytosol"/>
    <property type="evidence" value="ECO:0007669"/>
    <property type="project" value="TreeGrafter"/>
</dbReference>
<dbReference type="GO" id="GO:0002161">
    <property type="term" value="F:aminoacyl-tRNA deacylase activity"/>
    <property type="evidence" value="ECO:0007669"/>
    <property type="project" value="InterPro"/>
</dbReference>
<dbReference type="GO" id="GO:0005524">
    <property type="term" value="F:ATP binding"/>
    <property type="evidence" value="ECO:0007669"/>
    <property type="project" value="UniProtKB-UniRule"/>
</dbReference>
<dbReference type="GO" id="GO:0004823">
    <property type="term" value="F:leucine-tRNA ligase activity"/>
    <property type="evidence" value="ECO:0007669"/>
    <property type="project" value="UniProtKB-UniRule"/>
</dbReference>
<dbReference type="GO" id="GO:0006429">
    <property type="term" value="P:leucyl-tRNA aminoacylation"/>
    <property type="evidence" value="ECO:0007669"/>
    <property type="project" value="UniProtKB-UniRule"/>
</dbReference>
<dbReference type="CDD" id="cd07958">
    <property type="entry name" value="Anticodon_Ia_Leu_BEm"/>
    <property type="match status" value="1"/>
</dbReference>
<dbReference type="CDD" id="cd00812">
    <property type="entry name" value="LeuRS_core"/>
    <property type="match status" value="1"/>
</dbReference>
<dbReference type="FunFam" id="1.10.730.10:FF:000002">
    <property type="entry name" value="Leucine--tRNA ligase"/>
    <property type="match status" value="2"/>
</dbReference>
<dbReference type="FunFam" id="2.20.28.290:FF:000001">
    <property type="entry name" value="Leucine--tRNA ligase"/>
    <property type="match status" value="1"/>
</dbReference>
<dbReference type="FunFam" id="3.10.20.590:FF:000001">
    <property type="entry name" value="Leucine--tRNA ligase"/>
    <property type="match status" value="1"/>
</dbReference>
<dbReference type="FunFam" id="3.40.50.620:FF:000003">
    <property type="entry name" value="Leucine--tRNA ligase"/>
    <property type="match status" value="1"/>
</dbReference>
<dbReference type="FunFam" id="3.40.50.620:FF:000124">
    <property type="entry name" value="Leucine--tRNA ligase"/>
    <property type="match status" value="1"/>
</dbReference>
<dbReference type="FunFam" id="3.90.740.10:FF:000012">
    <property type="entry name" value="Leucine--tRNA ligase"/>
    <property type="match status" value="1"/>
</dbReference>
<dbReference type="Gene3D" id="2.20.28.290">
    <property type="match status" value="1"/>
</dbReference>
<dbReference type="Gene3D" id="3.10.20.590">
    <property type="match status" value="1"/>
</dbReference>
<dbReference type="Gene3D" id="3.40.50.620">
    <property type="entry name" value="HUPs"/>
    <property type="match status" value="2"/>
</dbReference>
<dbReference type="Gene3D" id="1.10.730.10">
    <property type="entry name" value="Isoleucyl-tRNA Synthetase, Domain 1"/>
    <property type="match status" value="1"/>
</dbReference>
<dbReference type="Gene3D" id="3.90.740.10">
    <property type="entry name" value="Valyl/Leucyl/Isoleucyl-tRNA synthetase, editing domain"/>
    <property type="match status" value="1"/>
</dbReference>
<dbReference type="HAMAP" id="MF_00049_B">
    <property type="entry name" value="Leu_tRNA_synth_B"/>
    <property type="match status" value="1"/>
</dbReference>
<dbReference type="InterPro" id="IPR001412">
    <property type="entry name" value="aa-tRNA-synth_I_CS"/>
</dbReference>
<dbReference type="InterPro" id="IPR002300">
    <property type="entry name" value="aa-tRNA-synth_Ia"/>
</dbReference>
<dbReference type="InterPro" id="IPR002302">
    <property type="entry name" value="Leu-tRNA-ligase"/>
</dbReference>
<dbReference type="InterPro" id="IPR025709">
    <property type="entry name" value="Leu_tRNA-synth_edit"/>
</dbReference>
<dbReference type="InterPro" id="IPR013155">
    <property type="entry name" value="M/V/L/I-tRNA-synth_anticd-bd"/>
</dbReference>
<dbReference type="InterPro" id="IPR015413">
    <property type="entry name" value="Methionyl/Leucyl_tRNA_Synth"/>
</dbReference>
<dbReference type="InterPro" id="IPR014729">
    <property type="entry name" value="Rossmann-like_a/b/a_fold"/>
</dbReference>
<dbReference type="InterPro" id="IPR009080">
    <property type="entry name" value="tRNAsynth_Ia_anticodon-bd"/>
</dbReference>
<dbReference type="InterPro" id="IPR009008">
    <property type="entry name" value="Val/Leu/Ile-tRNA-synth_edit"/>
</dbReference>
<dbReference type="NCBIfam" id="TIGR00396">
    <property type="entry name" value="leuS_bact"/>
    <property type="match status" value="1"/>
</dbReference>
<dbReference type="PANTHER" id="PTHR43740:SF2">
    <property type="entry name" value="LEUCINE--TRNA LIGASE, MITOCHONDRIAL"/>
    <property type="match status" value="1"/>
</dbReference>
<dbReference type="PANTHER" id="PTHR43740">
    <property type="entry name" value="LEUCYL-TRNA SYNTHETASE"/>
    <property type="match status" value="1"/>
</dbReference>
<dbReference type="Pfam" id="PF08264">
    <property type="entry name" value="Anticodon_1"/>
    <property type="match status" value="1"/>
</dbReference>
<dbReference type="Pfam" id="PF00133">
    <property type="entry name" value="tRNA-synt_1"/>
    <property type="match status" value="2"/>
</dbReference>
<dbReference type="Pfam" id="PF13603">
    <property type="entry name" value="tRNA-synt_1_2"/>
    <property type="match status" value="1"/>
</dbReference>
<dbReference type="Pfam" id="PF09334">
    <property type="entry name" value="tRNA-synt_1g"/>
    <property type="match status" value="1"/>
</dbReference>
<dbReference type="PRINTS" id="PR00985">
    <property type="entry name" value="TRNASYNTHLEU"/>
</dbReference>
<dbReference type="SUPFAM" id="SSF47323">
    <property type="entry name" value="Anticodon-binding domain of a subclass of class I aminoacyl-tRNA synthetases"/>
    <property type="match status" value="1"/>
</dbReference>
<dbReference type="SUPFAM" id="SSF52374">
    <property type="entry name" value="Nucleotidylyl transferase"/>
    <property type="match status" value="1"/>
</dbReference>
<dbReference type="SUPFAM" id="SSF50677">
    <property type="entry name" value="ValRS/IleRS/LeuRS editing domain"/>
    <property type="match status" value="1"/>
</dbReference>
<dbReference type="PROSITE" id="PS00178">
    <property type="entry name" value="AA_TRNA_LIGASE_I"/>
    <property type="match status" value="1"/>
</dbReference>
<organism>
    <name type="scientific">Yersinia pestis bv. Antiqua (strain Angola)</name>
    <dbReference type="NCBI Taxonomy" id="349746"/>
    <lineage>
        <taxon>Bacteria</taxon>
        <taxon>Pseudomonadati</taxon>
        <taxon>Pseudomonadota</taxon>
        <taxon>Gammaproteobacteria</taxon>
        <taxon>Enterobacterales</taxon>
        <taxon>Yersiniaceae</taxon>
        <taxon>Yersinia</taxon>
    </lineage>
</organism>